<proteinExistence type="inferred from homology"/>
<accession>Q9I5A4</accession>
<sequence length="394" mass="42421">MPSRNILVINCGSSSIKFALVNEAHSLFPLHGLAERLGSRDAVLRWKRGGDSDSLMIPNADHRAALAQLLPMVQNAAGGKLHGIGHRVVHGGELFTHATRIDDRVVEAIRATAPLAPLHNPANLQGIEAAMTLFPKLPHVAVFDTAFHQSLPEHAYRYALPEALYREHGVRRYGFHGTSHRYVSHRAAEMAGLAVGDSSWLSAHLGNGSSTCAIVNGQSLDTSMGLTPLEGLVMGTRSGDVDPNLHSHLARTLGWSLERIDSMLNNESGLLGLSDLSNDMRTLEQEREQGHPGAALAIEVFCYRLAKSLAAMSCALPQLDGVIFTGGIGENSPLVRAKTAAHLRLFDLRLDQEANARCVRGVAGPIQAAGHPRVLVIPTNEERQIALDTLALLD</sequence>
<keyword id="KW-0067">ATP-binding</keyword>
<keyword id="KW-0963">Cytoplasm</keyword>
<keyword id="KW-0418">Kinase</keyword>
<keyword id="KW-0460">Magnesium</keyword>
<keyword id="KW-0479">Metal-binding</keyword>
<keyword id="KW-0547">Nucleotide-binding</keyword>
<keyword id="KW-1185">Reference proteome</keyword>
<keyword id="KW-0808">Transferase</keyword>
<gene>
    <name evidence="1" type="primary">ackA</name>
    <name type="ordered locus">PA0836</name>
</gene>
<feature type="chain" id="PRO_0000107602" description="Acetate kinase">
    <location>
        <begin position="1"/>
        <end position="394"/>
    </location>
</feature>
<feature type="active site" description="Proton donor/acceptor" evidence="1">
    <location>
        <position position="144"/>
    </location>
</feature>
<feature type="binding site" evidence="1">
    <location>
        <position position="10"/>
    </location>
    <ligand>
        <name>Mg(2+)</name>
        <dbReference type="ChEBI" id="CHEBI:18420"/>
    </ligand>
</feature>
<feature type="binding site" evidence="1">
    <location>
        <position position="17"/>
    </location>
    <ligand>
        <name>ATP</name>
        <dbReference type="ChEBI" id="CHEBI:30616"/>
    </ligand>
</feature>
<feature type="binding site" evidence="1">
    <location>
        <position position="87"/>
    </location>
    <ligand>
        <name>substrate</name>
    </ligand>
</feature>
<feature type="binding site" evidence="1">
    <location>
        <begin position="204"/>
        <end position="208"/>
    </location>
    <ligand>
        <name>ATP</name>
        <dbReference type="ChEBI" id="CHEBI:30616"/>
    </ligand>
</feature>
<feature type="binding site" evidence="1">
    <location>
        <begin position="279"/>
        <end position="281"/>
    </location>
    <ligand>
        <name>ATP</name>
        <dbReference type="ChEBI" id="CHEBI:30616"/>
    </ligand>
</feature>
<feature type="binding site" evidence="1">
    <location>
        <begin position="327"/>
        <end position="331"/>
    </location>
    <ligand>
        <name>ATP</name>
        <dbReference type="ChEBI" id="CHEBI:30616"/>
    </ligand>
</feature>
<feature type="binding site" evidence="1">
    <location>
        <position position="381"/>
    </location>
    <ligand>
        <name>Mg(2+)</name>
        <dbReference type="ChEBI" id="CHEBI:18420"/>
    </ligand>
</feature>
<feature type="site" description="Transition state stabilizer" evidence="1">
    <location>
        <position position="176"/>
    </location>
</feature>
<feature type="site" description="Transition state stabilizer" evidence="1">
    <location>
        <position position="237"/>
    </location>
</feature>
<reference key="1">
    <citation type="journal article" date="2000" name="Nature">
        <title>Complete genome sequence of Pseudomonas aeruginosa PAO1, an opportunistic pathogen.</title>
        <authorList>
            <person name="Stover C.K."/>
            <person name="Pham X.-Q.T."/>
            <person name="Erwin A.L."/>
            <person name="Mizoguchi S.D."/>
            <person name="Warrener P."/>
            <person name="Hickey M.J."/>
            <person name="Brinkman F.S.L."/>
            <person name="Hufnagle W.O."/>
            <person name="Kowalik D.J."/>
            <person name="Lagrou M."/>
            <person name="Garber R.L."/>
            <person name="Goltry L."/>
            <person name="Tolentino E."/>
            <person name="Westbrock-Wadman S."/>
            <person name="Yuan Y."/>
            <person name="Brody L.L."/>
            <person name="Coulter S.N."/>
            <person name="Folger K.R."/>
            <person name="Kas A."/>
            <person name="Larbig K."/>
            <person name="Lim R.M."/>
            <person name="Smith K.A."/>
            <person name="Spencer D.H."/>
            <person name="Wong G.K.-S."/>
            <person name="Wu Z."/>
            <person name="Paulsen I.T."/>
            <person name="Reizer J."/>
            <person name="Saier M.H. Jr."/>
            <person name="Hancock R.E.W."/>
            <person name="Lory S."/>
            <person name="Olson M.V."/>
        </authorList>
    </citation>
    <scope>NUCLEOTIDE SEQUENCE [LARGE SCALE GENOMIC DNA]</scope>
    <source>
        <strain>ATCC 15692 / DSM 22644 / CIP 104116 / JCM 14847 / LMG 12228 / 1C / PRS 101 / PAO1</strain>
    </source>
</reference>
<protein>
    <recommendedName>
        <fullName evidence="1">Acetate kinase</fullName>
        <ecNumber evidence="1">2.7.2.1</ecNumber>
    </recommendedName>
    <alternativeName>
        <fullName evidence="1">Acetokinase</fullName>
    </alternativeName>
</protein>
<organism>
    <name type="scientific">Pseudomonas aeruginosa (strain ATCC 15692 / DSM 22644 / CIP 104116 / JCM 14847 / LMG 12228 / 1C / PRS 101 / PAO1)</name>
    <dbReference type="NCBI Taxonomy" id="208964"/>
    <lineage>
        <taxon>Bacteria</taxon>
        <taxon>Pseudomonadati</taxon>
        <taxon>Pseudomonadota</taxon>
        <taxon>Gammaproteobacteria</taxon>
        <taxon>Pseudomonadales</taxon>
        <taxon>Pseudomonadaceae</taxon>
        <taxon>Pseudomonas</taxon>
    </lineage>
</organism>
<name>ACKA_PSEAE</name>
<dbReference type="EC" id="2.7.2.1" evidence="1"/>
<dbReference type="EMBL" id="AE004091">
    <property type="protein sequence ID" value="AAG04225.1"/>
    <property type="molecule type" value="Genomic_DNA"/>
</dbReference>
<dbReference type="PIR" id="D83541">
    <property type="entry name" value="D83541"/>
</dbReference>
<dbReference type="RefSeq" id="NP_249527.1">
    <property type="nucleotide sequence ID" value="NC_002516.2"/>
</dbReference>
<dbReference type="RefSeq" id="WP_003085814.1">
    <property type="nucleotide sequence ID" value="NZ_QZGE01000007.1"/>
</dbReference>
<dbReference type="SMR" id="Q9I5A4"/>
<dbReference type="FunCoup" id="Q9I5A4">
    <property type="interactions" value="450"/>
</dbReference>
<dbReference type="STRING" id="208964.PA0836"/>
<dbReference type="PaxDb" id="208964-PA0836"/>
<dbReference type="GeneID" id="877790"/>
<dbReference type="KEGG" id="pae:PA0836"/>
<dbReference type="PATRIC" id="fig|208964.12.peg.867"/>
<dbReference type="PseudoCAP" id="PA0836"/>
<dbReference type="HOGENOM" id="CLU_020352_0_1_6"/>
<dbReference type="InParanoid" id="Q9I5A4"/>
<dbReference type="OrthoDB" id="9802453at2"/>
<dbReference type="PhylomeDB" id="Q9I5A4"/>
<dbReference type="BioCyc" id="PAER208964:G1FZ6-850-MONOMER"/>
<dbReference type="UniPathway" id="UPA00340">
    <property type="reaction ID" value="UER00458"/>
</dbReference>
<dbReference type="Proteomes" id="UP000002438">
    <property type="component" value="Chromosome"/>
</dbReference>
<dbReference type="GO" id="GO:0005829">
    <property type="term" value="C:cytosol"/>
    <property type="evidence" value="ECO:0000318"/>
    <property type="project" value="GO_Central"/>
</dbReference>
<dbReference type="GO" id="GO:0008776">
    <property type="term" value="F:acetate kinase activity"/>
    <property type="evidence" value="ECO:0000318"/>
    <property type="project" value="GO_Central"/>
</dbReference>
<dbReference type="GO" id="GO:0005524">
    <property type="term" value="F:ATP binding"/>
    <property type="evidence" value="ECO:0007669"/>
    <property type="project" value="UniProtKB-KW"/>
</dbReference>
<dbReference type="GO" id="GO:0000287">
    <property type="term" value="F:magnesium ion binding"/>
    <property type="evidence" value="ECO:0007669"/>
    <property type="project" value="UniProtKB-UniRule"/>
</dbReference>
<dbReference type="GO" id="GO:0006083">
    <property type="term" value="P:acetate metabolic process"/>
    <property type="evidence" value="ECO:0000318"/>
    <property type="project" value="GO_Central"/>
</dbReference>
<dbReference type="GO" id="GO:0006085">
    <property type="term" value="P:acetyl-CoA biosynthetic process"/>
    <property type="evidence" value="ECO:0007669"/>
    <property type="project" value="UniProtKB-UniRule"/>
</dbReference>
<dbReference type="CDD" id="cd24010">
    <property type="entry name" value="ASKHA_NBD_AcK_PK"/>
    <property type="match status" value="1"/>
</dbReference>
<dbReference type="Gene3D" id="3.30.420.40">
    <property type="match status" value="2"/>
</dbReference>
<dbReference type="HAMAP" id="MF_00020">
    <property type="entry name" value="Acetate_kinase"/>
    <property type="match status" value="1"/>
</dbReference>
<dbReference type="InterPro" id="IPR004372">
    <property type="entry name" value="Ac/propionate_kinase"/>
</dbReference>
<dbReference type="InterPro" id="IPR000890">
    <property type="entry name" value="Aliphatic_acid_kin_short-chain"/>
</dbReference>
<dbReference type="InterPro" id="IPR023865">
    <property type="entry name" value="Aliphatic_acid_kinase_CS"/>
</dbReference>
<dbReference type="InterPro" id="IPR043129">
    <property type="entry name" value="ATPase_NBD"/>
</dbReference>
<dbReference type="NCBIfam" id="TIGR00016">
    <property type="entry name" value="ackA"/>
    <property type="match status" value="1"/>
</dbReference>
<dbReference type="PANTHER" id="PTHR21060">
    <property type="entry name" value="ACETATE KINASE"/>
    <property type="match status" value="1"/>
</dbReference>
<dbReference type="PANTHER" id="PTHR21060:SF21">
    <property type="entry name" value="ACETATE KINASE"/>
    <property type="match status" value="1"/>
</dbReference>
<dbReference type="Pfam" id="PF00871">
    <property type="entry name" value="Acetate_kinase"/>
    <property type="match status" value="1"/>
</dbReference>
<dbReference type="PIRSF" id="PIRSF000722">
    <property type="entry name" value="Acetate_prop_kin"/>
    <property type="match status" value="1"/>
</dbReference>
<dbReference type="PRINTS" id="PR00471">
    <property type="entry name" value="ACETATEKNASE"/>
</dbReference>
<dbReference type="SUPFAM" id="SSF53067">
    <property type="entry name" value="Actin-like ATPase domain"/>
    <property type="match status" value="2"/>
</dbReference>
<dbReference type="PROSITE" id="PS01075">
    <property type="entry name" value="ACETATE_KINASE_1"/>
    <property type="match status" value="1"/>
</dbReference>
<evidence type="ECO:0000255" key="1">
    <source>
        <dbReference type="HAMAP-Rule" id="MF_00020"/>
    </source>
</evidence>
<comment type="function">
    <text evidence="1">Catalyzes the formation of acetyl phosphate from acetate and ATP. Can also catalyze the reverse reaction.</text>
</comment>
<comment type="catalytic activity">
    <reaction evidence="1">
        <text>acetate + ATP = acetyl phosphate + ADP</text>
        <dbReference type="Rhea" id="RHEA:11352"/>
        <dbReference type="ChEBI" id="CHEBI:22191"/>
        <dbReference type="ChEBI" id="CHEBI:30089"/>
        <dbReference type="ChEBI" id="CHEBI:30616"/>
        <dbReference type="ChEBI" id="CHEBI:456216"/>
        <dbReference type="EC" id="2.7.2.1"/>
    </reaction>
</comment>
<comment type="cofactor">
    <cofactor evidence="1">
        <name>Mg(2+)</name>
        <dbReference type="ChEBI" id="CHEBI:18420"/>
    </cofactor>
    <cofactor evidence="1">
        <name>Mn(2+)</name>
        <dbReference type="ChEBI" id="CHEBI:29035"/>
    </cofactor>
    <text evidence="1">Mg(2+). Can also accept Mn(2+).</text>
</comment>
<comment type="pathway">
    <text evidence="1">Metabolic intermediate biosynthesis; acetyl-CoA biosynthesis; acetyl-CoA from acetate: step 1/2.</text>
</comment>
<comment type="subunit">
    <text evidence="1">Homodimer.</text>
</comment>
<comment type="subcellular location">
    <subcellularLocation>
        <location evidence="1">Cytoplasm</location>
    </subcellularLocation>
</comment>
<comment type="similarity">
    <text evidence="1">Belongs to the acetokinase family.</text>
</comment>